<organism>
    <name type="scientific">Bacillus cereus (strain ATCC 14579 / DSM 31 / CCUG 7414 / JCM 2152 / NBRC 15305 / NCIMB 9373 / NCTC 2599 / NRRL B-3711)</name>
    <dbReference type="NCBI Taxonomy" id="226900"/>
    <lineage>
        <taxon>Bacteria</taxon>
        <taxon>Bacillati</taxon>
        <taxon>Bacillota</taxon>
        <taxon>Bacilli</taxon>
        <taxon>Bacillales</taxon>
        <taxon>Bacillaceae</taxon>
        <taxon>Bacillus</taxon>
        <taxon>Bacillus cereus group</taxon>
    </lineage>
</organism>
<keyword id="KW-0963">Cytoplasm</keyword>
<keyword id="KW-0489">Methyltransferase</keyword>
<keyword id="KW-1185">Reference proteome</keyword>
<keyword id="KW-0698">rRNA processing</keyword>
<keyword id="KW-0949">S-adenosyl-L-methionine</keyword>
<keyword id="KW-0808">Transferase</keyword>
<reference key="1">
    <citation type="journal article" date="2003" name="Nature">
        <title>Genome sequence of Bacillus cereus and comparative analysis with Bacillus anthracis.</title>
        <authorList>
            <person name="Ivanova N."/>
            <person name="Sorokin A."/>
            <person name="Anderson I."/>
            <person name="Galleron N."/>
            <person name="Candelon B."/>
            <person name="Kapatral V."/>
            <person name="Bhattacharyya A."/>
            <person name="Reznik G."/>
            <person name="Mikhailova N."/>
            <person name="Lapidus A."/>
            <person name="Chu L."/>
            <person name="Mazur M."/>
            <person name="Goltsman E."/>
            <person name="Larsen N."/>
            <person name="D'Souza M."/>
            <person name="Walunas T."/>
            <person name="Grechkin Y."/>
            <person name="Pusch G."/>
            <person name="Haselkorn R."/>
            <person name="Fonstein M."/>
            <person name="Ehrlich S.D."/>
            <person name="Overbeek R."/>
            <person name="Kyrpides N.C."/>
        </authorList>
    </citation>
    <scope>NUCLEOTIDE SEQUENCE [LARGE SCALE GENOMIC DNA]</scope>
    <source>
        <strain>ATCC 14579 / DSM 31 / CCUG 7414 / JCM 2152 / NBRC 15305 / NCIMB 9373 / NCTC 2599 / NRRL B-3711</strain>
    </source>
</reference>
<name>RLMH_BACCR</name>
<protein>
    <recommendedName>
        <fullName evidence="1">Ribosomal RNA large subunit methyltransferase H</fullName>
        <ecNumber evidence="1">2.1.1.177</ecNumber>
    </recommendedName>
    <alternativeName>
        <fullName evidence="1">23S rRNA (pseudouridine1915-N3)-methyltransferase</fullName>
    </alternativeName>
    <alternativeName>
        <fullName evidence="1">23S rRNA m3Psi1915 methyltransferase</fullName>
    </alternativeName>
    <alternativeName>
        <fullName evidence="1">rRNA (pseudouridine-N3-)-methyltransferase RlmH</fullName>
    </alternativeName>
</protein>
<sequence>MNISIISIGKLKEKYLKQGIAEYLKRLSAYAKVEVIELPDEKAPENLSEAEMLIVKEKEGIRILDKISDDTHVIALAIEGKQKSSEEFAISLDRLATYGKSKVAFVIGGSLGLSSEVMKRSNESLSFSKMTLPHQLMRLVLLEQVYRAFRINRGEPYHK</sequence>
<gene>
    <name evidence="1" type="primary">rlmH</name>
    <name type="ordered locus">BC_5456</name>
</gene>
<evidence type="ECO:0000255" key="1">
    <source>
        <dbReference type="HAMAP-Rule" id="MF_00658"/>
    </source>
</evidence>
<proteinExistence type="inferred from homology"/>
<accession>P59731</accession>
<dbReference type="EC" id="2.1.1.177" evidence="1"/>
<dbReference type="EMBL" id="AE016877">
    <property type="protein sequence ID" value="AAP12317.1"/>
    <property type="molecule type" value="Genomic_DNA"/>
</dbReference>
<dbReference type="RefSeq" id="NP_835116.1">
    <property type="nucleotide sequence ID" value="NC_004722.1"/>
</dbReference>
<dbReference type="RefSeq" id="WP_001027000.1">
    <property type="nucleotide sequence ID" value="NZ_CP138336.1"/>
</dbReference>
<dbReference type="SMR" id="P59731"/>
<dbReference type="STRING" id="226900.BC_5456"/>
<dbReference type="GeneID" id="51137132"/>
<dbReference type="KEGG" id="bce:BC5456"/>
<dbReference type="PATRIC" id="fig|226900.8.peg.5637"/>
<dbReference type="HOGENOM" id="CLU_100552_0_0_9"/>
<dbReference type="OrthoDB" id="9806643at2"/>
<dbReference type="Proteomes" id="UP000001417">
    <property type="component" value="Chromosome"/>
</dbReference>
<dbReference type="GO" id="GO:0005737">
    <property type="term" value="C:cytoplasm"/>
    <property type="evidence" value="ECO:0007669"/>
    <property type="project" value="UniProtKB-SubCell"/>
</dbReference>
<dbReference type="GO" id="GO:0070038">
    <property type="term" value="F:rRNA (pseudouridine-N3-)-methyltransferase activity"/>
    <property type="evidence" value="ECO:0007669"/>
    <property type="project" value="UniProtKB-UniRule"/>
</dbReference>
<dbReference type="CDD" id="cd18081">
    <property type="entry name" value="RlmH-like"/>
    <property type="match status" value="1"/>
</dbReference>
<dbReference type="Gene3D" id="3.40.1280.10">
    <property type="match status" value="1"/>
</dbReference>
<dbReference type="HAMAP" id="MF_00658">
    <property type="entry name" value="23SrRNA_methyltr_H"/>
    <property type="match status" value="1"/>
</dbReference>
<dbReference type="InterPro" id="IPR029028">
    <property type="entry name" value="Alpha/beta_knot_MTases"/>
</dbReference>
<dbReference type="InterPro" id="IPR003742">
    <property type="entry name" value="RlmH-like"/>
</dbReference>
<dbReference type="InterPro" id="IPR029026">
    <property type="entry name" value="tRNA_m1G_MTases_N"/>
</dbReference>
<dbReference type="NCBIfam" id="NF000985">
    <property type="entry name" value="PRK00103.1-3"/>
    <property type="match status" value="1"/>
</dbReference>
<dbReference type="NCBIfam" id="TIGR00246">
    <property type="entry name" value="tRNA_RlmH_YbeA"/>
    <property type="match status" value="1"/>
</dbReference>
<dbReference type="PANTHER" id="PTHR33603">
    <property type="entry name" value="METHYLTRANSFERASE"/>
    <property type="match status" value="1"/>
</dbReference>
<dbReference type="PANTHER" id="PTHR33603:SF1">
    <property type="entry name" value="RIBOSOMAL RNA LARGE SUBUNIT METHYLTRANSFERASE H"/>
    <property type="match status" value="1"/>
</dbReference>
<dbReference type="Pfam" id="PF02590">
    <property type="entry name" value="SPOUT_MTase"/>
    <property type="match status" value="1"/>
</dbReference>
<dbReference type="PIRSF" id="PIRSF004505">
    <property type="entry name" value="MT_bac"/>
    <property type="match status" value="1"/>
</dbReference>
<dbReference type="SUPFAM" id="SSF75217">
    <property type="entry name" value="alpha/beta knot"/>
    <property type="match status" value="1"/>
</dbReference>
<feature type="chain" id="PRO_0000198082" description="Ribosomal RNA large subunit methyltransferase H">
    <location>
        <begin position="1"/>
        <end position="159"/>
    </location>
</feature>
<feature type="binding site" evidence="1">
    <location>
        <position position="76"/>
    </location>
    <ligand>
        <name>S-adenosyl-L-methionine</name>
        <dbReference type="ChEBI" id="CHEBI:59789"/>
    </ligand>
</feature>
<feature type="binding site" evidence="1">
    <location>
        <position position="108"/>
    </location>
    <ligand>
        <name>S-adenosyl-L-methionine</name>
        <dbReference type="ChEBI" id="CHEBI:59789"/>
    </ligand>
</feature>
<feature type="binding site" evidence="1">
    <location>
        <begin position="127"/>
        <end position="132"/>
    </location>
    <ligand>
        <name>S-adenosyl-L-methionine</name>
        <dbReference type="ChEBI" id="CHEBI:59789"/>
    </ligand>
</feature>
<comment type="function">
    <text evidence="1">Specifically methylates the pseudouridine at position 1915 (m3Psi1915) in 23S rRNA.</text>
</comment>
<comment type="catalytic activity">
    <reaction evidence="1">
        <text>pseudouridine(1915) in 23S rRNA + S-adenosyl-L-methionine = N(3)-methylpseudouridine(1915) in 23S rRNA + S-adenosyl-L-homocysteine + H(+)</text>
        <dbReference type="Rhea" id="RHEA:42752"/>
        <dbReference type="Rhea" id="RHEA-COMP:10221"/>
        <dbReference type="Rhea" id="RHEA-COMP:10222"/>
        <dbReference type="ChEBI" id="CHEBI:15378"/>
        <dbReference type="ChEBI" id="CHEBI:57856"/>
        <dbReference type="ChEBI" id="CHEBI:59789"/>
        <dbReference type="ChEBI" id="CHEBI:65314"/>
        <dbReference type="ChEBI" id="CHEBI:74486"/>
        <dbReference type="EC" id="2.1.1.177"/>
    </reaction>
</comment>
<comment type="subunit">
    <text evidence="1">Homodimer.</text>
</comment>
<comment type="subcellular location">
    <subcellularLocation>
        <location evidence="1">Cytoplasm</location>
    </subcellularLocation>
</comment>
<comment type="similarity">
    <text evidence="1">Belongs to the RNA methyltransferase RlmH family.</text>
</comment>